<keyword id="KW-0687">Ribonucleoprotein</keyword>
<keyword id="KW-0689">Ribosomal protein</keyword>
<keyword id="KW-0694">RNA-binding</keyword>
<keyword id="KW-0699">rRNA-binding</keyword>
<organism>
    <name type="scientific">Escherichia coli (strain ATCC 8739 / DSM 1576 / NBRC 3972 / NCIMB 8545 / WDCM 00012 / Crooks)</name>
    <dbReference type="NCBI Taxonomy" id="481805"/>
    <lineage>
        <taxon>Bacteria</taxon>
        <taxon>Pseudomonadati</taxon>
        <taxon>Pseudomonadota</taxon>
        <taxon>Gammaproteobacteria</taxon>
        <taxon>Enterobacterales</taxon>
        <taxon>Enterobacteriaceae</taxon>
        <taxon>Escherichia</taxon>
    </lineage>
</organism>
<protein>
    <recommendedName>
        <fullName evidence="1">Large ribosomal subunit protein uL24</fullName>
    </recommendedName>
    <alternativeName>
        <fullName evidence="2">50S ribosomal protein L24</fullName>
    </alternativeName>
</protein>
<name>RL24_ECOLC</name>
<accession>B1IPZ0</accession>
<comment type="function">
    <text evidence="1">One of two assembly initiator proteins, it binds directly to the 5'-end of the 23S rRNA, where it nucleates assembly of the 50S subunit.</text>
</comment>
<comment type="function">
    <text evidence="1">One of the proteins that surrounds the polypeptide exit tunnel on the outside of the subunit.</text>
</comment>
<comment type="subunit">
    <text evidence="1">Part of the 50S ribosomal subunit.</text>
</comment>
<comment type="similarity">
    <text evidence="1">Belongs to the universal ribosomal protein uL24 family.</text>
</comment>
<feature type="chain" id="PRO_1000086479" description="Large ribosomal subunit protein uL24">
    <location>
        <begin position="1"/>
        <end position="104"/>
    </location>
</feature>
<sequence length="104" mass="11316">MAAKIRRDDEVIVLTGKDKGKRGKVKNVLSSGKVIVEGINLVKKHQKPVPALNQPGGIVEKEAAIQVSNVAIFNAATGKADRVGFRFEDGKKVRFFKSNSETIK</sequence>
<dbReference type="EMBL" id="CP000946">
    <property type="protein sequence ID" value="ACA76082.1"/>
    <property type="molecule type" value="Genomic_DNA"/>
</dbReference>
<dbReference type="RefSeq" id="WP_000729185.1">
    <property type="nucleotide sequence ID" value="NZ_MTFT01000014.1"/>
</dbReference>
<dbReference type="SMR" id="B1IPZ0"/>
<dbReference type="GeneID" id="93778678"/>
<dbReference type="KEGG" id="ecl:EcolC_0404"/>
<dbReference type="HOGENOM" id="CLU_093315_2_2_6"/>
<dbReference type="GO" id="GO:0005829">
    <property type="term" value="C:cytosol"/>
    <property type="evidence" value="ECO:0007669"/>
    <property type="project" value="UniProtKB-ARBA"/>
</dbReference>
<dbReference type="GO" id="GO:1990904">
    <property type="term" value="C:ribonucleoprotein complex"/>
    <property type="evidence" value="ECO:0007669"/>
    <property type="project" value="UniProtKB-KW"/>
</dbReference>
<dbReference type="GO" id="GO:0005840">
    <property type="term" value="C:ribosome"/>
    <property type="evidence" value="ECO:0007669"/>
    <property type="project" value="UniProtKB-KW"/>
</dbReference>
<dbReference type="GO" id="GO:0019843">
    <property type="term" value="F:rRNA binding"/>
    <property type="evidence" value="ECO:0007669"/>
    <property type="project" value="UniProtKB-UniRule"/>
</dbReference>
<dbReference type="GO" id="GO:0003735">
    <property type="term" value="F:structural constituent of ribosome"/>
    <property type="evidence" value="ECO:0007669"/>
    <property type="project" value="InterPro"/>
</dbReference>
<dbReference type="GO" id="GO:0006412">
    <property type="term" value="P:translation"/>
    <property type="evidence" value="ECO:0007669"/>
    <property type="project" value="UniProtKB-UniRule"/>
</dbReference>
<dbReference type="CDD" id="cd06089">
    <property type="entry name" value="KOW_RPL26"/>
    <property type="match status" value="1"/>
</dbReference>
<dbReference type="FunFam" id="2.30.30.30:FF:000004">
    <property type="entry name" value="50S ribosomal protein L24"/>
    <property type="match status" value="1"/>
</dbReference>
<dbReference type="Gene3D" id="2.30.30.30">
    <property type="match status" value="1"/>
</dbReference>
<dbReference type="HAMAP" id="MF_01326_B">
    <property type="entry name" value="Ribosomal_uL24_B"/>
    <property type="match status" value="1"/>
</dbReference>
<dbReference type="InterPro" id="IPR005824">
    <property type="entry name" value="KOW"/>
</dbReference>
<dbReference type="InterPro" id="IPR014722">
    <property type="entry name" value="Rib_uL2_dom2"/>
</dbReference>
<dbReference type="InterPro" id="IPR003256">
    <property type="entry name" value="Ribosomal_uL24"/>
</dbReference>
<dbReference type="InterPro" id="IPR005825">
    <property type="entry name" value="Ribosomal_uL24_CS"/>
</dbReference>
<dbReference type="InterPro" id="IPR041988">
    <property type="entry name" value="Ribosomal_uL24_KOW"/>
</dbReference>
<dbReference type="InterPro" id="IPR008991">
    <property type="entry name" value="Translation_prot_SH3-like_sf"/>
</dbReference>
<dbReference type="NCBIfam" id="TIGR01079">
    <property type="entry name" value="rplX_bact"/>
    <property type="match status" value="1"/>
</dbReference>
<dbReference type="PANTHER" id="PTHR12903">
    <property type="entry name" value="MITOCHONDRIAL RIBOSOMAL PROTEIN L24"/>
    <property type="match status" value="1"/>
</dbReference>
<dbReference type="Pfam" id="PF00467">
    <property type="entry name" value="KOW"/>
    <property type="match status" value="1"/>
</dbReference>
<dbReference type="Pfam" id="PF17136">
    <property type="entry name" value="ribosomal_L24"/>
    <property type="match status" value="1"/>
</dbReference>
<dbReference type="SMART" id="SM00739">
    <property type="entry name" value="KOW"/>
    <property type="match status" value="1"/>
</dbReference>
<dbReference type="SUPFAM" id="SSF50104">
    <property type="entry name" value="Translation proteins SH3-like domain"/>
    <property type="match status" value="1"/>
</dbReference>
<dbReference type="PROSITE" id="PS01108">
    <property type="entry name" value="RIBOSOMAL_L24"/>
    <property type="match status" value="1"/>
</dbReference>
<gene>
    <name evidence="1" type="primary">rplX</name>
    <name type="ordered locus">EcolC_0404</name>
</gene>
<reference key="1">
    <citation type="submission" date="2008-02" db="EMBL/GenBank/DDBJ databases">
        <title>Complete sequence of Escherichia coli C str. ATCC 8739.</title>
        <authorList>
            <person name="Copeland A."/>
            <person name="Lucas S."/>
            <person name="Lapidus A."/>
            <person name="Glavina del Rio T."/>
            <person name="Dalin E."/>
            <person name="Tice H."/>
            <person name="Bruce D."/>
            <person name="Goodwin L."/>
            <person name="Pitluck S."/>
            <person name="Kiss H."/>
            <person name="Brettin T."/>
            <person name="Detter J.C."/>
            <person name="Han C."/>
            <person name="Kuske C.R."/>
            <person name="Schmutz J."/>
            <person name="Larimer F."/>
            <person name="Land M."/>
            <person name="Hauser L."/>
            <person name="Kyrpides N."/>
            <person name="Mikhailova N."/>
            <person name="Ingram L."/>
            <person name="Richardson P."/>
        </authorList>
    </citation>
    <scope>NUCLEOTIDE SEQUENCE [LARGE SCALE GENOMIC DNA]</scope>
    <source>
        <strain>ATCC 8739 / DSM 1576 / NBRC 3972 / NCIMB 8545 / WDCM 00012 / Crooks</strain>
    </source>
</reference>
<proteinExistence type="inferred from homology"/>
<evidence type="ECO:0000255" key="1">
    <source>
        <dbReference type="HAMAP-Rule" id="MF_01326"/>
    </source>
</evidence>
<evidence type="ECO:0000305" key="2"/>